<comment type="function">
    <text evidence="1">Catalyzes the attachment of isoleucine to tRNA(Ile). As IleRS can inadvertently accommodate and process structurally similar amino acids such as valine, to avoid such errors it has two additional distinct tRNA(Ile)-dependent editing activities. One activity is designated as 'pretransfer' editing and involves the hydrolysis of activated Val-AMP. The other activity is designated 'posttransfer' editing and involves deacylation of mischarged Val-tRNA(Ile).</text>
</comment>
<comment type="catalytic activity">
    <reaction evidence="1">
        <text>tRNA(Ile) + L-isoleucine + ATP = L-isoleucyl-tRNA(Ile) + AMP + diphosphate</text>
        <dbReference type="Rhea" id="RHEA:11060"/>
        <dbReference type="Rhea" id="RHEA-COMP:9666"/>
        <dbReference type="Rhea" id="RHEA-COMP:9695"/>
        <dbReference type="ChEBI" id="CHEBI:30616"/>
        <dbReference type="ChEBI" id="CHEBI:33019"/>
        <dbReference type="ChEBI" id="CHEBI:58045"/>
        <dbReference type="ChEBI" id="CHEBI:78442"/>
        <dbReference type="ChEBI" id="CHEBI:78528"/>
        <dbReference type="ChEBI" id="CHEBI:456215"/>
        <dbReference type="EC" id="6.1.1.5"/>
    </reaction>
</comment>
<comment type="cofactor">
    <cofactor evidence="1">
        <name>Zn(2+)</name>
        <dbReference type="ChEBI" id="CHEBI:29105"/>
    </cofactor>
    <text evidence="1">Binds 1 zinc ion per subunit.</text>
</comment>
<comment type="subunit">
    <text evidence="1">Monomer.</text>
</comment>
<comment type="subcellular location">
    <subcellularLocation>
        <location evidence="1">Cytoplasm</location>
    </subcellularLocation>
</comment>
<comment type="domain">
    <text evidence="1">IleRS has two distinct active sites: one for aminoacylation and one for editing. The misactivated valine is translocated from the active site to the editing site, which sterically excludes the correctly activated isoleucine. The single editing site contains two valyl binding pockets, one specific for each substrate (Val-AMP or Val-tRNA(Ile)).</text>
</comment>
<comment type="similarity">
    <text evidence="1">Belongs to the class-I aminoacyl-tRNA synthetase family. IleS type 1 subfamily.</text>
</comment>
<protein>
    <recommendedName>
        <fullName evidence="1">Isoleucine--tRNA ligase</fullName>
        <ecNumber evidence="1">6.1.1.5</ecNumber>
    </recommendedName>
    <alternativeName>
        <fullName evidence="1">Isoleucyl-tRNA synthetase</fullName>
        <shortName evidence="1">IleRS</shortName>
    </alternativeName>
</protein>
<gene>
    <name evidence="1" type="primary">ileS</name>
    <name type="ordered locus">YpAngola_A0790</name>
</gene>
<accession>A9R008</accession>
<keyword id="KW-0030">Aminoacyl-tRNA synthetase</keyword>
<keyword id="KW-0067">ATP-binding</keyword>
<keyword id="KW-0963">Cytoplasm</keyword>
<keyword id="KW-0436">Ligase</keyword>
<keyword id="KW-0479">Metal-binding</keyword>
<keyword id="KW-0547">Nucleotide-binding</keyword>
<keyword id="KW-0648">Protein biosynthesis</keyword>
<keyword id="KW-0862">Zinc</keyword>
<proteinExistence type="inferred from homology"/>
<sequence length="938" mass="104690">MSDYKNTLNLPETGFPMRGDLAKREPDMLKRWYEQDLYGIIRAAKKGKKTFILHDGPPYANGNIHIGHSVNKILKDIIVKSKGMAGYDSPYIPGWDCHGLPIELKVEQLIGKPGEKVSAAEFRTACRKYAAEQVEGQKKDFIRLGVLGDWDHPYLTMDFKTEANIIRALSKIIDNGHLHKGAKPVHWCTDCGSSLAEAEVEYYDKTSQSIDVRFNAVDTATVAAKFGVSAVNGPISLVIWTTTPWTLPANRAISLNAEYLYQLVQVEGECLILAADLVESVMKRAGITQWAVLGSCTGSDLELLRFTHPFMGFDVPAILGDHVTLDAGTGAVHTAPGHGPDDFVIGQKYGLEVANPVGPNGCYLAGTYPTLDGLFVFKANDVVVELLREKGALLHVEKLLHSYPCCWRHKTPIIFRATPQWFISMDQKGLRKQSLQEIKGVQWIPDWGQARIETMVANRPDWCISRQRTWGVPMSLFVHKETEQLHPRSIELMEEVAKRVEQDGIQAWWDLDPAEILGADAADYVKVPDTLDVWFDSGSTHSSVVDVRPEFGGHSPDMYLEGSDQHRGWFMSSLMIATAMKGKAPYRQVLTHGFTVDGQGRKMSKSIGNTISPQDVMNKLGGDILRLWVASTDYTGEIAVSDEILKRSADSYRRIRNTARFLLANLNGFDPAQHQVKPEEMVVVDRWAVGRAQAAQAEIMEAYENYDFHLVVQRLMQFCSVEMGSFYLDIIKDRQYTAKGDGIARRSCQTALFHIAEALVRWMAPIMSFTADEIWNHLPGERQQYVFTEEWYDGLFGLAGNESMNDTFWAELLKVRGEVNKVLEQARSDKRIGGSLEAAVTLYAEPELAARLNSLQDELRFVLLTSAAKVAAYADAGNDAQQSELIAGLKITFNKADGEKCPRCWHYTQDVGLVAEHAELCGRCVTNVAGDGEERKFA</sequence>
<evidence type="ECO:0000255" key="1">
    <source>
        <dbReference type="HAMAP-Rule" id="MF_02002"/>
    </source>
</evidence>
<dbReference type="EC" id="6.1.1.5" evidence="1"/>
<dbReference type="EMBL" id="CP000901">
    <property type="protein sequence ID" value="ABX85500.1"/>
    <property type="molecule type" value="Genomic_DNA"/>
</dbReference>
<dbReference type="RefSeq" id="WP_002210509.1">
    <property type="nucleotide sequence ID" value="NZ_CP009935.1"/>
</dbReference>
<dbReference type="SMR" id="A9R008"/>
<dbReference type="GeneID" id="57974135"/>
<dbReference type="KEGG" id="ypg:YpAngola_A0790"/>
<dbReference type="PATRIC" id="fig|349746.12.peg.1738"/>
<dbReference type="GO" id="GO:0005829">
    <property type="term" value="C:cytosol"/>
    <property type="evidence" value="ECO:0007669"/>
    <property type="project" value="TreeGrafter"/>
</dbReference>
<dbReference type="GO" id="GO:0002161">
    <property type="term" value="F:aminoacyl-tRNA deacylase activity"/>
    <property type="evidence" value="ECO:0007669"/>
    <property type="project" value="InterPro"/>
</dbReference>
<dbReference type="GO" id="GO:0005524">
    <property type="term" value="F:ATP binding"/>
    <property type="evidence" value="ECO:0007669"/>
    <property type="project" value="UniProtKB-UniRule"/>
</dbReference>
<dbReference type="GO" id="GO:0004822">
    <property type="term" value="F:isoleucine-tRNA ligase activity"/>
    <property type="evidence" value="ECO:0007669"/>
    <property type="project" value="UniProtKB-UniRule"/>
</dbReference>
<dbReference type="GO" id="GO:0000049">
    <property type="term" value="F:tRNA binding"/>
    <property type="evidence" value="ECO:0007669"/>
    <property type="project" value="InterPro"/>
</dbReference>
<dbReference type="GO" id="GO:0008270">
    <property type="term" value="F:zinc ion binding"/>
    <property type="evidence" value="ECO:0007669"/>
    <property type="project" value="UniProtKB-UniRule"/>
</dbReference>
<dbReference type="GO" id="GO:0006428">
    <property type="term" value="P:isoleucyl-tRNA aminoacylation"/>
    <property type="evidence" value="ECO:0007669"/>
    <property type="project" value="UniProtKB-UniRule"/>
</dbReference>
<dbReference type="CDD" id="cd07960">
    <property type="entry name" value="Anticodon_Ia_Ile_BEm"/>
    <property type="match status" value="1"/>
</dbReference>
<dbReference type="CDD" id="cd00818">
    <property type="entry name" value="IleRS_core"/>
    <property type="match status" value="1"/>
</dbReference>
<dbReference type="FunFam" id="1.10.730.20:FF:000001">
    <property type="entry name" value="Isoleucine--tRNA ligase"/>
    <property type="match status" value="1"/>
</dbReference>
<dbReference type="FunFam" id="3.40.50.620:FF:000042">
    <property type="entry name" value="Isoleucine--tRNA ligase"/>
    <property type="match status" value="1"/>
</dbReference>
<dbReference type="FunFam" id="3.40.50.620:FF:000048">
    <property type="entry name" value="Isoleucine--tRNA ligase"/>
    <property type="match status" value="1"/>
</dbReference>
<dbReference type="FunFam" id="3.90.740.10:FF:000002">
    <property type="entry name" value="Isoleucine--tRNA ligase"/>
    <property type="match status" value="1"/>
</dbReference>
<dbReference type="Gene3D" id="1.10.730.20">
    <property type="match status" value="1"/>
</dbReference>
<dbReference type="Gene3D" id="3.40.50.620">
    <property type="entry name" value="HUPs"/>
    <property type="match status" value="2"/>
</dbReference>
<dbReference type="Gene3D" id="3.90.740.10">
    <property type="entry name" value="Valyl/Leucyl/Isoleucyl-tRNA synthetase, editing domain"/>
    <property type="match status" value="1"/>
</dbReference>
<dbReference type="HAMAP" id="MF_02002">
    <property type="entry name" value="Ile_tRNA_synth_type1"/>
    <property type="match status" value="1"/>
</dbReference>
<dbReference type="InterPro" id="IPR001412">
    <property type="entry name" value="aa-tRNA-synth_I_CS"/>
</dbReference>
<dbReference type="InterPro" id="IPR002300">
    <property type="entry name" value="aa-tRNA-synth_Ia"/>
</dbReference>
<dbReference type="InterPro" id="IPR033708">
    <property type="entry name" value="Anticodon_Ile_BEm"/>
</dbReference>
<dbReference type="InterPro" id="IPR002301">
    <property type="entry name" value="Ile-tRNA-ligase"/>
</dbReference>
<dbReference type="InterPro" id="IPR023585">
    <property type="entry name" value="Ile-tRNA-ligase_type1"/>
</dbReference>
<dbReference type="InterPro" id="IPR050081">
    <property type="entry name" value="Ile-tRNA_ligase"/>
</dbReference>
<dbReference type="InterPro" id="IPR013155">
    <property type="entry name" value="M/V/L/I-tRNA-synth_anticd-bd"/>
</dbReference>
<dbReference type="InterPro" id="IPR014729">
    <property type="entry name" value="Rossmann-like_a/b/a_fold"/>
</dbReference>
<dbReference type="InterPro" id="IPR009080">
    <property type="entry name" value="tRNAsynth_Ia_anticodon-bd"/>
</dbReference>
<dbReference type="InterPro" id="IPR009008">
    <property type="entry name" value="Val/Leu/Ile-tRNA-synth_edit"/>
</dbReference>
<dbReference type="InterPro" id="IPR010663">
    <property type="entry name" value="Znf_FPG/IleRS"/>
</dbReference>
<dbReference type="NCBIfam" id="TIGR00392">
    <property type="entry name" value="ileS"/>
    <property type="match status" value="1"/>
</dbReference>
<dbReference type="PANTHER" id="PTHR42765:SF1">
    <property type="entry name" value="ISOLEUCINE--TRNA LIGASE, MITOCHONDRIAL"/>
    <property type="match status" value="1"/>
</dbReference>
<dbReference type="PANTHER" id="PTHR42765">
    <property type="entry name" value="SOLEUCYL-TRNA SYNTHETASE"/>
    <property type="match status" value="1"/>
</dbReference>
<dbReference type="Pfam" id="PF08264">
    <property type="entry name" value="Anticodon_1"/>
    <property type="match status" value="1"/>
</dbReference>
<dbReference type="Pfam" id="PF00133">
    <property type="entry name" value="tRNA-synt_1"/>
    <property type="match status" value="1"/>
</dbReference>
<dbReference type="Pfam" id="PF06827">
    <property type="entry name" value="zf-FPG_IleRS"/>
    <property type="match status" value="1"/>
</dbReference>
<dbReference type="PRINTS" id="PR00984">
    <property type="entry name" value="TRNASYNTHILE"/>
</dbReference>
<dbReference type="SUPFAM" id="SSF47323">
    <property type="entry name" value="Anticodon-binding domain of a subclass of class I aminoacyl-tRNA synthetases"/>
    <property type="match status" value="1"/>
</dbReference>
<dbReference type="SUPFAM" id="SSF52374">
    <property type="entry name" value="Nucleotidylyl transferase"/>
    <property type="match status" value="1"/>
</dbReference>
<dbReference type="SUPFAM" id="SSF50677">
    <property type="entry name" value="ValRS/IleRS/LeuRS editing domain"/>
    <property type="match status" value="1"/>
</dbReference>
<dbReference type="PROSITE" id="PS00178">
    <property type="entry name" value="AA_TRNA_LIGASE_I"/>
    <property type="match status" value="1"/>
</dbReference>
<reference key="1">
    <citation type="journal article" date="2010" name="J. Bacteriol.">
        <title>Genome sequence of the deep-rooted Yersinia pestis strain Angola reveals new insights into the evolution and pangenome of the plague bacterium.</title>
        <authorList>
            <person name="Eppinger M."/>
            <person name="Worsham P.L."/>
            <person name="Nikolich M.P."/>
            <person name="Riley D.R."/>
            <person name="Sebastian Y."/>
            <person name="Mou S."/>
            <person name="Achtman M."/>
            <person name="Lindler L.E."/>
            <person name="Ravel J."/>
        </authorList>
    </citation>
    <scope>NUCLEOTIDE SEQUENCE [LARGE SCALE GENOMIC DNA]</scope>
    <source>
        <strain>Angola</strain>
    </source>
</reference>
<organism>
    <name type="scientific">Yersinia pestis bv. Antiqua (strain Angola)</name>
    <dbReference type="NCBI Taxonomy" id="349746"/>
    <lineage>
        <taxon>Bacteria</taxon>
        <taxon>Pseudomonadati</taxon>
        <taxon>Pseudomonadota</taxon>
        <taxon>Gammaproteobacteria</taxon>
        <taxon>Enterobacterales</taxon>
        <taxon>Yersiniaceae</taxon>
        <taxon>Yersinia</taxon>
    </lineage>
</organism>
<name>SYI_YERPG</name>
<feature type="chain" id="PRO_1000189220" description="Isoleucine--tRNA ligase">
    <location>
        <begin position="1"/>
        <end position="938"/>
    </location>
</feature>
<feature type="short sequence motif" description="'HIGH' region">
    <location>
        <begin position="58"/>
        <end position="68"/>
    </location>
</feature>
<feature type="short sequence motif" description="'KMSKS' region">
    <location>
        <begin position="602"/>
        <end position="606"/>
    </location>
</feature>
<feature type="binding site" evidence="1">
    <location>
        <position position="561"/>
    </location>
    <ligand>
        <name>L-isoleucyl-5'-AMP</name>
        <dbReference type="ChEBI" id="CHEBI:178002"/>
    </ligand>
</feature>
<feature type="binding site" evidence="1">
    <location>
        <position position="605"/>
    </location>
    <ligand>
        <name>ATP</name>
        <dbReference type="ChEBI" id="CHEBI:30616"/>
    </ligand>
</feature>
<feature type="binding site" evidence="1">
    <location>
        <position position="901"/>
    </location>
    <ligand>
        <name>Zn(2+)</name>
        <dbReference type="ChEBI" id="CHEBI:29105"/>
    </ligand>
</feature>
<feature type="binding site" evidence="1">
    <location>
        <position position="904"/>
    </location>
    <ligand>
        <name>Zn(2+)</name>
        <dbReference type="ChEBI" id="CHEBI:29105"/>
    </ligand>
</feature>
<feature type="binding site" evidence="1">
    <location>
        <position position="921"/>
    </location>
    <ligand>
        <name>Zn(2+)</name>
        <dbReference type="ChEBI" id="CHEBI:29105"/>
    </ligand>
</feature>
<feature type="binding site" evidence="1">
    <location>
        <position position="924"/>
    </location>
    <ligand>
        <name>Zn(2+)</name>
        <dbReference type="ChEBI" id="CHEBI:29105"/>
    </ligand>
</feature>